<sequence length="358" mass="41710">MLFKEAQAFIENMYKECHYETQIINKRLHDIELEIKETGTYTHTEEELIYGAKMAWRNSNRCIGRLFWDSLNVIDARDVTDEASFLSSITYHITQATNEGKLKPYITIYAPKDGPKIFNNQLIRYAGYDNCGDPAEKEVTRLANHLGWKGKGTNFDVLPLIYQLPNESVKFYEYPTSLIKEVPIEHNHYPKLRKLNLKWYAVPIISNMDLKIGGIVYPTAPFNGWYMVTEIGVRNFIDDYRYNLLEKVADAFEFDTLKNNSFNKDRALVELNYAVYHSFKKEGVSIVDHLTAAKQFELFERNEAQQGRQVTGKWSWLAPPLSPTLTSNYHHGYDNTVKDPNFFYKKKESNANQCPFHH</sequence>
<accession>P0A094</accession>
<accession>Q99SX3</accession>
<dbReference type="EC" id="1.14.14.47" evidence="2"/>
<dbReference type="EMBL" id="BA000033">
    <property type="protein sequence ID" value="BAB95720.1"/>
    <property type="molecule type" value="Genomic_DNA"/>
</dbReference>
<dbReference type="RefSeq" id="WP_000897635.1">
    <property type="nucleotide sequence ID" value="NC_003923.1"/>
</dbReference>
<dbReference type="SMR" id="P0A094"/>
<dbReference type="DrugBank" id="DB02234">
    <property type="generic name" value="S-Ethylisothiourea"/>
</dbReference>
<dbReference type="KEGG" id="sam:MW1855"/>
<dbReference type="HOGENOM" id="CLU_040293_0_0_9"/>
<dbReference type="GO" id="GO:0020037">
    <property type="term" value="F:heme binding"/>
    <property type="evidence" value="ECO:0007669"/>
    <property type="project" value="InterPro"/>
</dbReference>
<dbReference type="GO" id="GO:0046872">
    <property type="term" value="F:metal ion binding"/>
    <property type="evidence" value="ECO:0007669"/>
    <property type="project" value="UniProtKB-KW"/>
</dbReference>
<dbReference type="GO" id="GO:0004517">
    <property type="term" value="F:nitric-oxide synthase activity"/>
    <property type="evidence" value="ECO:0007669"/>
    <property type="project" value="InterPro"/>
</dbReference>
<dbReference type="GO" id="GO:0006809">
    <property type="term" value="P:nitric oxide biosynthetic process"/>
    <property type="evidence" value="ECO:0007669"/>
    <property type="project" value="InterPro"/>
</dbReference>
<dbReference type="CDD" id="cd00794">
    <property type="entry name" value="NOS_oxygenase_prok"/>
    <property type="match status" value="1"/>
</dbReference>
<dbReference type="Gene3D" id="3.90.340.10">
    <property type="entry name" value="Nitric Oxide Synthase, Chain A, domain 1"/>
    <property type="match status" value="1"/>
</dbReference>
<dbReference type="Gene3D" id="3.90.1230.10">
    <property type="entry name" value="Nitric Oxide Synthase, Chain A, domain 3"/>
    <property type="match status" value="1"/>
</dbReference>
<dbReference type="Gene3D" id="3.90.440.10">
    <property type="entry name" value="Nitric Oxide Synthase,Heme Domain,Chain A domain 2"/>
    <property type="match status" value="1"/>
</dbReference>
<dbReference type="InterPro" id="IPR017142">
    <property type="entry name" value="Nitric_oxide_synthase_Oase-su"/>
</dbReference>
<dbReference type="InterPro" id="IPR050607">
    <property type="entry name" value="NOS"/>
</dbReference>
<dbReference type="InterPro" id="IPR044943">
    <property type="entry name" value="NOS_dom_1"/>
</dbReference>
<dbReference type="InterPro" id="IPR044940">
    <property type="entry name" value="NOS_dom_2"/>
</dbReference>
<dbReference type="InterPro" id="IPR044944">
    <property type="entry name" value="NOS_dom_3"/>
</dbReference>
<dbReference type="InterPro" id="IPR004030">
    <property type="entry name" value="NOS_N"/>
</dbReference>
<dbReference type="InterPro" id="IPR036119">
    <property type="entry name" value="NOS_N_sf"/>
</dbReference>
<dbReference type="PANTHER" id="PTHR43410:SF1">
    <property type="entry name" value="NITRIC OXIDE SYNTHASE"/>
    <property type="match status" value="1"/>
</dbReference>
<dbReference type="PANTHER" id="PTHR43410">
    <property type="entry name" value="NITRIC OXIDE SYNTHASE OXYGENASE"/>
    <property type="match status" value="1"/>
</dbReference>
<dbReference type="Pfam" id="PF02898">
    <property type="entry name" value="NO_synthase"/>
    <property type="match status" value="1"/>
</dbReference>
<dbReference type="PIRSF" id="PIRSF037219">
    <property type="entry name" value="NOS_oxygenase"/>
    <property type="match status" value="1"/>
</dbReference>
<dbReference type="SUPFAM" id="SSF56512">
    <property type="entry name" value="Nitric oxide (NO) synthase oxygenase domain"/>
    <property type="match status" value="1"/>
</dbReference>
<dbReference type="PROSITE" id="PS60001">
    <property type="entry name" value="NOS"/>
    <property type="match status" value="1"/>
</dbReference>
<keyword id="KW-0349">Heme</keyword>
<keyword id="KW-0408">Iron</keyword>
<keyword id="KW-0479">Metal-binding</keyword>
<keyword id="KW-0560">Oxidoreductase</keyword>
<comment type="function">
    <text evidence="2">Catalyzes the production of nitric oxide.</text>
</comment>
<comment type="catalytic activity">
    <reaction evidence="2">
        <text>3 reduced [flavodoxin] + 2 L-arginine + 4 O2 = 3 oxidized [flavodoxin] + 2 L-citrulline + 2 nitric oxide + 4 H2O + 5 H(+)</text>
        <dbReference type="Rhea" id="RHEA:52324"/>
        <dbReference type="Rhea" id="RHEA-COMP:10622"/>
        <dbReference type="Rhea" id="RHEA-COMP:10623"/>
        <dbReference type="ChEBI" id="CHEBI:15377"/>
        <dbReference type="ChEBI" id="CHEBI:15378"/>
        <dbReference type="ChEBI" id="CHEBI:15379"/>
        <dbReference type="ChEBI" id="CHEBI:16480"/>
        <dbReference type="ChEBI" id="CHEBI:32682"/>
        <dbReference type="ChEBI" id="CHEBI:57618"/>
        <dbReference type="ChEBI" id="CHEBI:57743"/>
        <dbReference type="ChEBI" id="CHEBI:58210"/>
        <dbReference type="EC" id="1.14.14.47"/>
    </reaction>
</comment>
<comment type="cofactor">
    <cofactor evidence="2">
        <name>heme</name>
        <dbReference type="ChEBI" id="CHEBI:30413"/>
    </cofactor>
</comment>
<comment type="cofactor">
    <cofactor evidence="2">
        <name>(6S)-5,6,7,8-tetrahydrofolate</name>
        <dbReference type="ChEBI" id="CHEBI:57453"/>
    </cofactor>
</comment>
<comment type="subunit">
    <text evidence="2">Homodimer.</text>
</comment>
<comment type="miscellaneous">
    <text>This protein is similar to the oxygenase domain of eukaryotic nitric oxide synthases but lacks the reductase domain which, in eukaryotes, is responsible for transfer of electrons to the ferric heme during nitric oxide synthesis.</text>
</comment>
<comment type="similarity">
    <text evidence="3">Belongs to the NOS family. Bacterial NOS oxygenase subfamily.</text>
</comment>
<feature type="chain" id="PRO_0000170961" description="Nitric oxide synthase oxygenase">
    <location>
        <begin position="1"/>
        <end position="358"/>
    </location>
</feature>
<feature type="binding site" description="axial binding residue" evidence="1">
    <location>
        <position position="62"/>
    </location>
    <ligand>
        <name>heme</name>
        <dbReference type="ChEBI" id="CHEBI:30413"/>
    </ligand>
    <ligandPart>
        <name>Fe</name>
        <dbReference type="ChEBI" id="CHEBI:18248"/>
    </ligandPart>
</feature>
<organism>
    <name type="scientific">Staphylococcus aureus (strain MW2)</name>
    <dbReference type="NCBI Taxonomy" id="196620"/>
    <lineage>
        <taxon>Bacteria</taxon>
        <taxon>Bacillati</taxon>
        <taxon>Bacillota</taxon>
        <taxon>Bacilli</taxon>
        <taxon>Bacillales</taxon>
        <taxon>Staphylococcaceae</taxon>
        <taxon>Staphylococcus</taxon>
    </lineage>
</organism>
<protein>
    <recommendedName>
        <fullName>Nitric oxide synthase oxygenase</fullName>
        <ecNumber evidence="2">1.14.14.47</ecNumber>
    </recommendedName>
    <alternativeName>
        <fullName>NOSoxy-like protein</fullName>
    </alternativeName>
    <alternativeName>
        <fullName>SANOS</fullName>
    </alternativeName>
</protein>
<name>NOSO_STAAW</name>
<proteinExistence type="inferred from homology"/>
<evidence type="ECO:0000250" key="1"/>
<evidence type="ECO:0000250" key="2">
    <source>
        <dbReference type="UniProtKB" id="O34453"/>
    </source>
</evidence>
<evidence type="ECO:0000305" key="3"/>
<reference key="1">
    <citation type="journal article" date="2002" name="Lancet">
        <title>Genome and virulence determinants of high virulence community-acquired MRSA.</title>
        <authorList>
            <person name="Baba T."/>
            <person name="Takeuchi F."/>
            <person name="Kuroda M."/>
            <person name="Yuzawa H."/>
            <person name="Aoki K."/>
            <person name="Oguchi A."/>
            <person name="Nagai Y."/>
            <person name="Iwama N."/>
            <person name="Asano K."/>
            <person name="Naimi T."/>
            <person name="Kuroda H."/>
            <person name="Cui L."/>
            <person name="Yamamoto K."/>
            <person name="Hiramatsu K."/>
        </authorList>
    </citation>
    <scope>NUCLEOTIDE SEQUENCE [LARGE SCALE GENOMIC DNA]</scope>
    <source>
        <strain>MW2</strain>
    </source>
</reference>
<gene>
    <name type="primary">nos</name>
    <name type="ordered locus">MW1855</name>
</gene>